<evidence type="ECO:0000255" key="1">
    <source>
        <dbReference type="PROSITE-ProRule" id="PRU10088"/>
    </source>
</evidence>
<evidence type="ECO:0000255" key="2">
    <source>
        <dbReference type="PROSITE-ProRule" id="PRU10089"/>
    </source>
</evidence>
<evidence type="ECO:0000255" key="3">
    <source>
        <dbReference type="PROSITE-ProRule" id="PRU10090"/>
    </source>
</evidence>
<evidence type="ECO:0000256" key="4">
    <source>
        <dbReference type="SAM" id="MobiDB-lite"/>
    </source>
</evidence>
<comment type="similarity">
    <text evidence="1 2 3">Belongs to the peptidase C1 family.</text>
</comment>
<sequence length="22" mass="2399">GADDSDWRKKGAVNVIXKDQGQ</sequence>
<name>CYSP_TRIVA</name>
<proteinExistence type="evidence at protein level"/>
<reference key="1">
    <citation type="journal article" date="1993" name="FEMS Microbiol. Lett.">
        <title>Purification of cysteine proteinases from trichomonads using bacitracin-sepharose.</title>
        <authorList>
            <person name="Irvine J.W."/>
            <person name="Coombs G.H."/>
            <person name="North M.J."/>
        </authorList>
    </citation>
    <scope>PROTEIN SEQUENCE</scope>
</reference>
<protein>
    <recommendedName>
        <fullName>Cysteine proteinase</fullName>
        <ecNumber>3.4.22.-</ecNumber>
    </recommendedName>
</protein>
<dbReference type="EC" id="3.4.22.-"/>
<dbReference type="MEROPS" id="C01.148"/>
<dbReference type="GO" id="GO:0008234">
    <property type="term" value="F:cysteine-type peptidase activity"/>
    <property type="evidence" value="ECO:0007669"/>
    <property type="project" value="UniProtKB-KW"/>
</dbReference>
<dbReference type="GO" id="GO:0006508">
    <property type="term" value="P:proteolysis"/>
    <property type="evidence" value="ECO:0007669"/>
    <property type="project" value="UniProtKB-KW"/>
</dbReference>
<keyword id="KW-0903">Direct protein sequencing</keyword>
<keyword id="KW-0378">Hydrolase</keyword>
<keyword id="KW-0645">Protease</keyword>
<keyword id="KW-0788">Thiol protease</keyword>
<accession>P33404</accession>
<organism>
    <name type="scientific">Trichomonas vaginalis</name>
    <dbReference type="NCBI Taxonomy" id="5722"/>
    <lineage>
        <taxon>Eukaryota</taxon>
        <taxon>Metamonada</taxon>
        <taxon>Parabasalia</taxon>
        <taxon>Trichomonadida</taxon>
        <taxon>Trichomonadidae</taxon>
        <taxon>Trichomonas</taxon>
    </lineage>
</organism>
<feature type="chain" id="PRO_0000050546" description="Cysteine proteinase">
    <location>
        <begin position="1"/>
        <end position="22" status="greater than"/>
    </location>
</feature>
<feature type="region of interest" description="Disordered" evidence="4">
    <location>
        <begin position="1"/>
        <end position="22"/>
    </location>
</feature>
<feature type="unsure residue" description="G or K">
    <location>
        <position position="1"/>
    </location>
</feature>
<feature type="non-terminal residue">
    <location>
        <position position="22"/>
    </location>
</feature>